<comment type="function">
    <text evidence="1">Catalyzes the transfer of the phosphoribosyl group of 5-phosphorylribose-1-pyrophosphate (PRPP) to anthranilate to yield N-(5'-phosphoribosyl)-anthranilate (PRA).</text>
</comment>
<comment type="catalytic activity">
    <reaction evidence="1">
        <text>N-(5-phospho-beta-D-ribosyl)anthranilate + diphosphate = 5-phospho-alpha-D-ribose 1-diphosphate + anthranilate</text>
        <dbReference type="Rhea" id="RHEA:11768"/>
        <dbReference type="ChEBI" id="CHEBI:16567"/>
        <dbReference type="ChEBI" id="CHEBI:18277"/>
        <dbReference type="ChEBI" id="CHEBI:33019"/>
        <dbReference type="ChEBI" id="CHEBI:58017"/>
        <dbReference type="EC" id="2.4.2.18"/>
    </reaction>
</comment>
<comment type="cofactor">
    <cofactor evidence="1">
        <name>Mg(2+)</name>
        <dbReference type="ChEBI" id="CHEBI:18420"/>
    </cofactor>
    <text evidence="1">Binds 2 magnesium ions per monomer.</text>
</comment>
<comment type="pathway">
    <text evidence="1">Amino-acid biosynthesis; L-tryptophan biosynthesis; L-tryptophan from chorismate: step 2/5.</text>
</comment>
<comment type="subunit">
    <text evidence="1">Homodimer.</text>
</comment>
<comment type="similarity">
    <text evidence="1">Belongs to the anthranilate phosphoribosyltransferase family.</text>
</comment>
<protein>
    <recommendedName>
        <fullName evidence="1">Anthranilate phosphoribosyltransferase</fullName>
        <ecNumber evidence="1">2.4.2.18</ecNumber>
    </recommendedName>
</protein>
<dbReference type="EC" id="2.4.2.18" evidence="1"/>
<dbReference type="EMBL" id="AF132318">
    <property type="protein sequence ID" value="AAF14252.1"/>
    <property type="molecule type" value="Genomic_DNA"/>
</dbReference>
<dbReference type="RefSeq" id="WP_158336487.1">
    <property type="nucleotide sequence ID" value="NZ_CP033004.1"/>
</dbReference>
<dbReference type="SMR" id="Q9RQ35"/>
<dbReference type="OrthoDB" id="9806430at2"/>
<dbReference type="UniPathway" id="UPA00035">
    <property type="reaction ID" value="UER00041"/>
</dbReference>
<dbReference type="GO" id="GO:0005829">
    <property type="term" value="C:cytosol"/>
    <property type="evidence" value="ECO:0007669"/>
    <property type="project" value="TreeGrafter"/>
</dbReference>
<dbReference type="GO" id="GO:0004048">
    <property type="term" value="F:anthranilate phosphoribosyltransferase activity"/>
    <property type="evidence" value="ECO:0007669"/>
    <property type="project" value="UniProtKB-UniRule"/>
</dbReference>
<dbReference type="GO" id="GO:0000287">
    <property type="term" value="F:magnesium ion binding"/>
    <property type="evidence" value="ECO:0007669"/>
    <property type="project" value="UniProtKB-UniRule"/>
</dbReference>
<dbReference type="GO" id="GO:0000162">
    <property type="term" value="P:L-tryptophan biosynthetic process"/>
    <property type="evidence" value="ECO:0007669"/>
    <property type="project" value="UniProtKB-UniRule"/>
</dbReference>
<dbReference type="Gene3D" id="3.40.1030.10">
    <property type="entry name" value="Nucleoside phosphorylase/phosphoribosyltransferase catalytic domain"/>
    <property type="match status" value="1"/>
</dbReference>
<dbReference type="Gene3D" id="1.20.970.10">
    <property type="entry name" value="Transferase, Pyrimidine Nucleoside Phosphorylase, Chain C"/>
    <property type="match status" value="1"/>
</dbReference>
<dbReference type="HAMAP" id="MF_00211">
    <property type="entry name" value="TrpD"/>
    <property type="match status" value="1"/>
</dbReference>
<dbReference type="InterPro" id="IPR005940">
    <property type="entry name" value="Anthranilate_Pribosyl_Tfrase"/>
</dbReference>
<dbReference type="InterPro" id="IPR000312">
    <property type="entry name" value="Glycosyl_Trfase_fam3"/>
</dbReference>
<dbReference type="InterPro" id="IPR017459">
    <property type="entry name" value="Glycosyl_Trfase_fam3_N_dom"/>
</dbReference>
<dbReference type="InterPro" id="IPR036320">
    <property type="entry name" value="Glycosyl_Trfase_fam3_N_dom_sf"/>
</dbReference>
<dbReference type="InterPro" id="IPR035902">
    <property type="entry name" value="Nuc_phospho_transferase"/>
</dbReference>
<dbReference type="NCBIfam" id="TIGR01245">
    <property type="entry name" value="trpD"/>
    <property type="match status" value="1"/>
</dbReference>
<dbReference type="PANTHER" id="PTHR43285">
    <property type="entry name" value="ANTHRANILATE PHOSPHORIBOSYLTRANSFERASE"/>
    <property type="match status" value="1"/>
</dbReference>
<dbReference type="PANTHER" id="PTHR43285:SF2">
    <property type="entry name" value="ANTHRANILATE PHOSPHORIBOSYLTRANSFERASE"/>
    <property type="match status" value="1"/>
</dbReference>
<dbReference type="Pfam" id="PF02885">
    <property type="entry name" value="Glycos_trans_3N"/>
    <property type="match status" value="1"/>
</dbReference>
<dbReference type="Pfam" id="PF00591">
    <property type="entry name" value="Glycos_transf_3"/>
    <property type="match status" value="1"/>
</dbReference>
<dbReference type="SUPFAM" id="SSF52418">
    <property type="entry name" value="Nucleoside phosphorylase/phosphoribosyltransferase catalytic domain"/>
    <property type="match status" value="1"/>
</dbReference>
<dbReference type="SUPFAM" id="SSF47648">
    <property type="entry name" value="Nucleoside phosphorylase/phosphoribosyltransferase N-terminal domain"/>
    <property type="match status" value="1"/>
</dbReference>
<proteinExistence type="inferred from homology"/>
<reference key="1">
    <citation type="journal article" date="1999" name="Mol. Biol. Evol.">
        <title>Sequence evolution in bacterial endosymbionts having extreme base compositions.</title>
        <authorList>
            <person name="Clark M.A."/>
            <person name="Moran N.A."/>
            <person name="Baumann P."/>
        </authorList>
    </citation>
    <scope>NUCLEOTIDE SEQUENCE [GENOMIC DNA]</scope>
</reference>
<accession>Q9RQ35</accession>
<gene>
    <name evidence="1" type="primary">trpD</name>
</gene>
<feature type="chain" id="PRO_0000154438" description="Anthranilate phosphoribosyltransferase">
    <location>
        <begin position="1"/>
        <end position="331"/>
    </location>
</feature>
<feature type="binding site" evidence="1">
    <location>
        <position position="79"/>
    </location>
    <ligand>
        <name>5-phospho-alpha-D-ribose 1-diphosphate</name>
        <dbReference type="ChEBI" id="CHEBI:58017"/>
    </ligand>
</feature>
<feature type="binding site" evidence="1">
    <location>
        <position position="79"/>
    </location>
    <ligand>
        <name>anthranilate</name>
        <dbReference type="ChEBI" id="CHEBI:16567"/>
        <label>1</label>
    </ligand>
</feature>
<feature type="binding site" evidence="1">
    <location>
        <begin position="82"/>
        <end position="83"/>
    </location>
    <ligand>
        <name>5-phospho-alpha-D-ribose 1-diphosphate</name>
        <dbReference type="ChEBI" id="CHEBI:58017"/>
    </ligand>
</feature>
<feature type="binding site" evidence="1">
    <location>
        <position position="87"/>
    </location>
    <ligand>
        <name>5-phospho-alpha-D-ribose 1-diphosphate</name>
        <dbReference type="ChEBI" id="CHEBI:58017"/>
    </ligand>
</feature>
<feature type="binding site" evidence="1">
    <location>
        <begin position="89"/>
        <end position="92"/>
    </location>
    <ligand>
        <name>5-phospho-alpha-D-ribose 1-diphosphate</name>
        <dbReference type="ChEBI" id="CHEBI:58017"/>
    </ligand>
</feature>
<feature type="binding site" evidence="1">
    <location>
        <position position="91"/>
    </location>
    <ligand>
        <name>Mg(2+)</name>
        <dbReference type="ChEBI" id="CHEBI:18420"/>
        <label>1</label>
    </ligand>
</feature>
<feature type="binding site" evidence="1">
    <location>
        <begin position="107"/>
        <end position="115"/>
    </location>
    <ligand>
        <name>5-phospho-alpha-D-ribose 1-diphosphate</name>
        <dbReference type="ChEBI" id="CHEBI:58017"/>
    </ligand>
</feature>
<feature type="binding site" evidence="1">
    <location>
        <position position="110"/>
    </location>
    <ligand>
        <name>anthranilate</name>
        <dbReference type="ChEBI" id="CHEBI:16567"/>
        <label>1</label>
    </ligand>
</feature>
<feature type="binding site" evidence="1">
    <location>
        <position position="119"/>
    </location>
    <ligand>
        <name>5-phospho-alpha-D-ribose 1-diphosphate</name>
        <dbReference type="ChEBI" id="CHEBI:58017"/>
    </ligand>
</feature>
<feature type="binding site" evidence="1">
    <location>
        <position position="165"/>
    </location>
    <ligand>
        <name>anthranilate</name>
        <dbReference type="ChEBI" id="CHEBI:16567"/>
        <label>2</label>
    </ligand>
</feature>
<feature type="binding site" evidence="1">
    <location>
        <position position="223"/>
    </location>
    <ligand>
        <name>Mg(2+)</name>
        <dbReference type="ChEBI" id="CHEBI:18420"/>
        <label>2</label>
    </ligand>
</feature>
<feature type="binding site" evidence="1">
    <location>
        <position position="224"/>
    </location>
    <ligand>
        <name>Mg(2+)</name>
        <dbReference type="ChEBI" id="CHEBI:18420"/>
        <label>1</label>
    </ligand>
</feature>
<feature type="binding site" evidence="1">
    <location>
        <position position="224"/>
    </location>
    <ligand>
        <name>Mg(2+)</name>
        <dbReference type="ChEBI" id="CHEBI:18420"/>
        <label>2</label>
    </ligand>
</feature>
<sequence>MNNILNRIYNGYNLTEIESYNLFQYIMSGKINNVQLSAILIALKIKGESEQEIMGAMQACLEQAQPFPKQNYMFSDIVGTGGDLSNSINISTASALVGATCGLKIIKHCNSSISGKSGSYDLLKEFDININISQKKSQEMLNKLNVCFLFAPQYHASFKHVSLVRKILKTRTLFNILGPLLNPSNPPLSVIGVYSTKLMIPIAHILKKLNRHRSIIVYSNNIDEVTLHSPTNITELKNSKITSYTLYPESFGVHFHDKNTILGGTPKENYEIVKKVFQGKGPISITETIAANTAILLQLFGNEDLKKNTQYALKIIYSGKVYQKIIELSKF</sequence>
<keyword id="KW-0028">Amino-acid biosynthesis</keyword>
<keyword id="KW-0057">Aromatic amino acid biosynthesis</keyword>
<keyword id="KW-0328">Glycosyltransferase</keyword>
<keyword id="KW-0460">Magnesium</keyword>
<keyword id="KW-0479">Metal-binding</keyword>
<keyword id="KW-0808">Transferase</keyword>
<keyword id="KW-0822">Tryptophan biosynthesis</keyword>
<organism>
    <name type="scientific">Buchnera aphidicola subsp. Melaphis rhois</name>
    <dbReference type="NCBI Taxonomy" id="118103"/>
    <lineage>
        <taxon>Bacteria</taxon>
        <taxon>Pseudomonadati</taxon>
        <taxon>Pseudomonadota</taxon>
        <taxon>Gammaproteobacteria</taxon>
        <taxon>Enterobacterales</taxon>
        <taxon>Erwiniaceae</taxon>
        <taxon>Buchnera</taxon>
    </lineage>
</organism>
<evidence type="ECO:0000255" key="1">
    <source>
        <dbReference type="HAMAP-Rule" id="MF_00211"/>
    </source>
</evidence>
<name>TRPD_BUCMH</name>